<dbReference type="EMBL" id="CU928158">
    <property type="protein sequence ID" value="CAQ87957.1"/>
    <property type="molecule type" value="Genomic_DNA"/>
</dbReference>
<dbReference type="RefSeq" id="WP_000080947.1">
    <property type="nucleotide sequence ID" value="NC_011740.1"/>
</dbReference>
<dbReference type="SMR" id="B7LW06"/>
<dbReference type="GeneID" id="75172757"/>
<dbReference type="KEGG" id="efe:EFER_0396"/>
<dbReference type="HOGENOM" id="CLU_114845_0_0_6"/>
<dbReference type="OrthoDB" id="350535at2"/>
<dbReference type="Proteomes" id="UP000000745">
    <property type="component" value="Chromosome"/>
</dbReference>
<dbReference type="GO" id="GO:0010181">
    <property type="term" value="F:FMN binding"/>
    <property type="evidence" value="ECO:0007669"/>
    <property type="project" value="InterPro"/>
</dbReference>
<dbReference type="GO" id="GO:0036211">
    <property type="term" value="P:protein modification process"/>
    <property type="evidence" value="ECO:0007669"/>
    <property type="project" value="InterPro"/>
</dbReference>
<dbReference type="FunFam" id="3.40.50.360:FF:000005">
    <property type="entry name" value="Protein NrdI"/>
    <property type="match status" value="1"/>
</dbReference>
<dbReference type="Gene3D" id="3.40.50.360">
    <property type="match status" value="1"/>
</dbReference>
<dbReference type="HAMAP" id="MF_00128">
    <property type="entry name" value="NrdI"/>
    <property type="match status" value="1"/>
</dbReference>
<dbReference type="InterPro" id="IPR029039">
    <property type="entry name" value="Flavoprotein-like_sf"/>
</dbReference>
<dbReference type="InterPro" id="IPR020852">
    <property type="entry name" value="RNR_Ib_NrdI_bac"/>
</dbReference>
<dbReference type="InterPro" id="IPR004465">
    <property type="entry name" value="RNR_NrdI"/>
</dbReference>
<dbReference type="NCBIfam" id="TIGR00333">
    <property type="entry name" value="nrdI"/>
    <property type="match status" value="1"/>
</dbReference>
<dbReference type="PANTHER" id="PTHR37297">
    <property type="entry name" value="PROTEIN NRDI"/>
    <property type="match status" value="1"/>
</dbReference>
<dbReference type="PANTHER" id="PTHR37297:SF1">
    <property type="entry name" value="PROTEIN NRDI"/>
    <property type="match status" value="1"/>
</dbReference>
<dbReference type="Pfam" id="PF07972">
    <property type="entry name" value="Flavodoxin_NdrI"/>
    <property type="match status" value="1"/>
</dbReference>
<dbReference type="PIRSF" id="PIRSF005087">
    <property type="entry name" value="NrdI"/>
    <property type="match status" value="1"/>
</dbReference>
<dbReference type="SUPFAM" id="SSF52218">
    <property type="entry name" value="Flavoproteins"/>
    <property type="match status" value="1"/>
</dbReference>
<gene>
    <name evidence="1" type="primary">nrdI</name>
    <name type="ordered locus">EFER_0396</name>
</gene>
<sequence>MSQLVYFSSSSENTQRFIERLGLPAVRIPLNERERIQVDEPYILIVPSYGGGGTAGAVPRQVIRFLNDEHNRALLRGVIASGNRNFGEAYGRAGDVIARKCGVPWLYRFELMGTQSDIENVRKGVTEFWQRQPQNA</sequence>
<proteinExistence type="inferred from homology"/>
<name>NRDI_ESCF3</name>
<protein>
    <recommendedName>
        <fullName evidence="1">Protein NrdI</fullName>
    </recommendedName>
</protein>
<comment type="function">
    <text evidence="1">Probably involved in ribonucleotide reductase function.</text>
</comment>
<comment type="similarity">
    <text evidence="1">Belongs to the NrdI family.</text>
</comment>
<feature type="chain" id="PRO_1000117712" description="Protein NrdI">
    <location>
        <begin position="1"/>
        <end position="136"/>
    </location>
</feature>
<organism>
    <name type="scientific">Escherichia fergusonii (strain ATCC 35469 / DSM 13698 / CCUG 18766 / IAM 14443 / JCM 21226 / LMG 7866 / NBRC 102419 / NCTC 12128 / CDC 0568-73)</name>
    <dbReference type="NCBI Taxonomy" id="585054"/>
    <lineage>
        <taxon>Bacteria</taxon>
        <taxon>Pseudomonadati</taxon>
        <taxon>Pseudomonadota</taxon>
        <taxon>Gammaproteobacteria</taxon>
        <taxon>Enterobacterales</taxon>
        <taxon>Enterobacteriaceae</taxon>
        <taxon>Escherichia</taxon>
    </lineage>
</organism>
<accession>B7LW06</accession>
<evidence type="ECO:0000255" key="1">
    <source>
        <dbReference type="HAMAP-Rule" id="MF_00128"/>
    </source>
</evidence>
<reference key="1">
    <citation type="journal article" date="2009" name="PLoS Genet.">
        <title>Organised genome dynamics in the Escherichia coli species results in highly diverse adaptive paths.</title>
        <authorList>
            <person name="Touchon M."/>
            <person name="Hoede C."/>
            <person name="Tenaillon O."/>
            <person name="Barbe V."/>
            <person name="Baeriswyl S."/>
            <person name="Bidet P."/>
            <person name="Bingen E."/>
            <person name="Bonacorsi S."/>
            <person name="Bouchier C."/>
            <person name="Bouvet O."/>
            <person name="Calteau A."/>
            <person name="Chiapello H."/>
            <person name="Clermont O."/>
            <person name="Cruveiller S."/>
            <person name="Danchin A."/>
            <person name="Diard M."/>
            <person name="Dossat C."/>
            <person name="Karoui M.E."/>
            <person name="Frapy E."/>
            <person name="Garry L."/>
            <person name="Ghigo J.M."/>
            <person name="Gilles A.M."/>
            <person name="Johnson J."/>
            <person name="Le Bouguenec C."/>
            <person name="Lescat M."/>
            <person name="Mangenot S."/>
            <person name="Martinez-Jehanne V."/>
            <person name="Matic I."/>
            <person name="Nassif X."/>
            <person name="Oztas S."/>
            <person name="Petit M.A."/>
            <person name="Pichon C."/>
            <person name="Rouy Z."/>
            <person name="Ruf C.S."/>
            <person name="Schneider D."/>
            <person name="Tourret J."/>
            <person name="Vacherie B."/>
            <person name="Vallenet D."/>
            <person name="Medigue C."/>
            <person name="Rocha E.P.C."/>
            <person name="Denamur E."/>
        </authorList>
    </citation>
    <scope>NUCLEOTIDE SEQUENCE [LARGE SCALE GENOMIC DNA]</scope>
    <source>
        <strain>ATCC 35469 / DSM 13698 / BCRC 15582 / CCUG 18766 / IAM 14443 / JCM 21226 / LMG 7866 / NBRC 102419 / NCTC 12128 / CDC 0568-73</strain>
    </source>
</reference>